<gene>
    <name evidence="1" type="primary">fmt</name>
    <name type="ordered locus">BURPS1106A_0160</name>
</gene>
<name>FMT_BURP0</name>
<feature type="chain" id="PRO_1000020033" description="Methionyl-tRNA formyltransferase">
    <location>
        <begin position="1"/>
        <end position="327"/>
    </location>
</feature>
<feature type="binding site" evidence="1">
    <location>
        <begin position="121"/>
        <end position="124"/>
    </location>
    <ligand>
        <name>(6S)-5,6,7,8-tetrahydrofolate</name>
        <dbReference type="ChEBI" id="CHEBI:57453"/>
    </ligand>
</feature>
<keyword id="KW-0648">Protein biosynthesis</keyword>
<keyword id="KW-0808">Transferase</keyword>
<accession>A3NQ23</accession>
<dbReference type="EC" id="2.1.2.9" evidence="1"/>
<dbReference type="EMBL" id="CP000572">
    <property type="protein sequence ID" value="ABN91301.1"/>
    <property type="molecule type" value="Genomic_DNA"/>
</dbReference>
<dbReference type="RefSeq" id="WP_004535363.1">
    <property type="nucleotide sequence ID" value="NC_009076.1"/>
</dbReference>
<dbReference type="SMR" id="A3NQ23"/>
<dbReference type="KEGG" id="bpl:BURPS1106A_0160"/>
<dbReference type="HOGENOM" id="CLU_033347_1_2_4"/>
<dbReference type="Proteomes" id="UP000006738">
    <property type="component" value="Chromosome I"/>
</dbReference>
<dbReference type="GO" id="GO:0005829">
    <property type="term" value="C:cytosol"/>
    <property type="evidence" value="ECO:0007669"/>
    <property type="project" value="TreeGrafter"/>
</dbReference>
<dbReference type="GO" id="GO:0004479">
    <property type="term" value="F:methionyl-tRNA formyltransferase activity"/>
    <property type="evidence" value="ECO:0007669"/>
    <property type="project" value="UniProtKB-UniRule"/>
</dbReference>
<dbReference type="CDD" id="cd08646">
    <property type="entry name" value="FMT_core_Met-tRNA-FMT_N"/>
    <property type="match status" value="1"/>
</dbReference>
<dbReference type="CDD" id="cd08704">
    <property type="entry name" value="Met_tRNA_FMT_C"/>
    <property type="match status" value="1"/>
</dbReference>
<dbReference type="FunFam" id="3.40.50.12230:FF:000001">
    <property type="entry name" value="Methionyl-tRNA formyltransferase"/>
    <property type="match status" value="1"/>
</dbReference>
<dbReference type="Gene3D" id="3.10.25.10">
    <property type="entry name" value="Formyl transferase, C-terminal domain"/>
    <property type="match status" value="1"/>
</dbReference>
<dbReference type="Gene3D" id="3.40.50.170">
    <property type="entry name" value="Formyl transferase, N-terminal domain"/>
    <property type="match status" value="1"/>
</dbReference>
<dbReference type="HAMAP" id="MF_00182">
    <property type="entry name" value="Formyl_trans"/>
    <property type="match status" value="1"/>
</dbReference>
<dbReference type="InterPro" id="IPR005794">
    <property type="entry name" value="Fmt"/>
</dbReference>
<dbReference type="InterPro" id="IPR005793">
    <property type="entry name" value="Formyl_trans_C"/>
</dbReference>
<dbReference type="InterPro" id="IPR037022">
    <property type="entry name" value="Formyl_trans_C_sf"/>
</dbReference>
<dbReference type="InterPro" id="IPR002376">
    <property type="entry name" value="Formyl_transf_N"/>
</dbReference>
<dbReference type="InterPro" id="IPR036477">
    <property type="entry name" value="Formyl_transf_N_sf"/>
</dbReference>
<dbReference type="InterPro" id="IPR011034">
    <property type="entry name" value="Formyl_transferase-like_C_sf"/>
</dbReference>
<dbReference type="InterPro" id="IPR001555">
    <property type="entry name" value="GART_AS"/>
</dbReference>
<dbReference type="InterPro" id="IPR044135">
    <property type="entry name" value="Met-tRNA-FMT_C"/>
</dbReference>
<dbReference type="InterPro" id="IPR041711">
    <property type="entry name" value="Met-tRNA-FMT_N"/>
</dbReference>
<dbReference type="NCBIfam" id="TIGR00460">
    <property type="entry name" value="fmt"/>
    <property type="match status" value="1"/>
</dbReference>
<dbReference type="PANTHER" id="PTHR11138">
    <property type="entry name" value="METHIONYL-TRNA FORMYLTRANSFERASE"/>
    <property type="match status" value="1"/>
</dbReference>
<dbReference type="PANTHER" id="PTHR11138:SF5">
    <property type="entry name" value="METHIONYL-TRNA FORMYLTRANSFERASE, MITOCHONDRIAL"/>
    <property type="match status" value="1"/>
</dbReference>
<dbReference type="Pfam" id="PF02911">
    <property type="entry name" value="Formyl_trans_C"/>
    <property type="match status" value="1"/>
</dbReference>
<dbReference type="Pfam" id="PF00551">
    <property type="entry name" value="Formyl_trans_N"/>
    <property type="match status" value="1"/>
</dbReference>
<dbReference type="SUPFAM" id="SSF50486">
    <property type="entry name" value="FMT C-terminal domain-like"/>
    <property type="match status" value="1"/>
</dbReference>
<dbReference type="SUPFAM" id="SSF53328">
    <property type="entry name" value="Formyltransferase"/>
    <property type="match status" value="1"/>
</dbReference>
<dbReference type="PROSITE" id="PS00373">
    <property type="entry name" value="GART"/>
    <property type="match status" value="1"/>
</dbReference>
<proteinExistence type="inferred from homology"/>
<evidence type="ECO:0000255" key="1">
    <source>
        <dbReference type="HAMAP-Rule" id="MF_00182"/>
    </source>
</evidence>
<reference key="1">
    <citation type="journal article" date="2010" name="Genome Biol. Evol.">
        <title>Continuing evolution of Burkholderia mallei through genome reduction and large-scale rearrangements.</title>
        <authorList>
            <person name="Losada L."/>
            <person name="Ronning C.M."/>
            <person name="DeShazer D."/>
            <person name="Woods D."/>
            <person name="Fedorova N."/>
            <person name="Kim H.S."/>
            <person name="Shabalina S.A."/>
            <person name="Pearson T.R."/>
            <person name="Brinkac L."/>
            <person name="Tan P."/>
            <person name="Nandi T."/>
            <person name="Crabtree J."/>
            <person name="Badger J."/>
            <person name="Beckstrom-Sternberg S."/>
            <person name="Saqib M."/>
            <person name="Schutzer S.E."/>
            <person name="Keim P."/>
            <person name="Nierman W.C."/>
        </authorList>
    </citation>
    <scope>NUCLEOTIDE SEQUENCE [LARGE SCALE GENOMIC DNA]</scope>
    <source>
        <strain>1106a</strain>
    </source>
</reference>
<organism>
    <name type="scientific">Burkholderia pseudomallei (strain 1106a)</name>
    <dbReference type="NCBI Taxonomy" id="357348"/>
    <lineage>
        <taxon>Bacteria</taxon>
        <taxon>Pseudomonadati</taxon>
        <taxon>Pseudomonadota</taxon>
        <taxon>Betaproteobacteria</taxon>
        <taxon>Burkholderiales</taxon>
        <taxon>Burkholderiaceae</taxon>
        <taxon>Burkholderia</taxon>
        <taxon>pseudomallei group</taxon>
    </lineage>
</organism>
<sequence length="327" mass="33928">MTHSLRVIFAGTPEFAAAALAAIHEAGFPVPLVLTQPDRPAGRGMKLQASAVKRYALERGMAVAQPPSLRRAGKYPVEAVAALDLLHATPHDVMVVAAYGLLLPQEVLELPRHGCINIHASLLPRWRGAAPIHRAIEAGDAETGVTLMQMDAGLDTGAMLHEARVAIAPDDTTATLHDKLAAAGARLVVDALVELERTGALAATPQPADGVTYAEKIGKHEAALDWRKPAAALARQVRAFDPFPGGAGTLDGATLKLWAADAVPGRDDAAPGTIVDIGPDGVVIACGEGALRVTQLQKPGGKRLPAREFLAGAPLAVGQRFAPADAA</sequence>
<comment type="function">
    <text evidence="1">Attaches a formyl group to the free amino group of methionyl-tRNA(fMet). The formyl group appears to play a dual role in the initiator identity of N-formylmethionyl-tRNA by promoting its recognition by IF2 and preventing the misappropriation of this tRNA by the elongation apparatus.</text>
</comment>
<comment type="catalytic activity">
    <reaction evidence="1">
        <text>L-methionyl-tRNA(fMet) + (6R)-10-formyltetrahydrofolate = N-formyl-L-methionyl-tRNA(fMet) + (6S)-5,6,7,8-tetrahydrofolate + H(+)</text>
        <dbReference type="Rhea" id="RHEA:24380"/>
        <dbReference type="Rhea" id="RHEA-COMP:9952"/>
        <dbReference type="Rhea" id="RHEA-COMP:9953"/>
        <dbReference type="ChEBI" id="CHEBI:15378"/>
        <dbReference type="ChEBI" id="CHEBI:57453"/>
        <dbReference type="ChEBI" id="CHEBI:78530"/>
        <dbReference type="ChEBI" id="CHEBI:78844"/>
        <dbReference type="ChEBI" id="CHEBI:195366"/>
        <dbReference type="EC" id="2.1.2.9"/>
    </reaction>
</comment>
<comment type="similarity">
    <text evidence="1">Belongs to the Fmt family.</text>
</comment>
<protein>
    <recommendedName>
        <fullName evidence="1">Methionyl-tRNA formyltransferase</fullName>
        <ecNumber evidence="1">2.1.2.9</ecNumber>
    </recommendedName>
</protein>